<keyword id="KW-0963">Cytoplasm</keyword>
<keyword id="KW-0328">Glycosyltransferase</keyword>
<keyword id="KW-0660">Purine salvage</keyword>
<keyword id="KW-0808">Transferase</keyword>
<dbReference type="EC" id="2.4.2.7" evidence="1"/>
<dbReference type="EMBL" id="AM933173">
    <property type="protein sequence ID" value="CAR36392.1"/>
    <property type="molecule type" value="Genomic_DNA"/>
</dbReference>
<dbReference type="RefSeq" id="WP_000127344.1">
    <property type="nucleotide sequence ID" value="NC_011274.1"/>
</dbReference>
<dbReference type="SMR" id="B5R607"/>
<dbReference type="KEGG" id="seg:SG0493"/>
<dbReference type="HOGENOM" id="CLU_063339_3_0_6"/>
<dbReference type="UniPathway" id="UPA00588">
    <property type="reaction ID" value="UER00646"/>
</dbReference>
<dbReference type="Proteomes" id="UP000008321">
    <property type="component" value="Chromosome"/>
</dbReference>
<dbReference type="GO" id="GO:0005829">
    <property type="term" value="C:cytosol"/>
    <property type="evidence" value="ECO:0007669"/>
    <property type="project" value="TreeGrafter"/>
</dbReference>
<dbReference type="GO" id="GO:0003999">
    <property type="term" value="F:adenine phosphoribosyltransferase activity"/>
    <property type="evidence" value="ECO:0007669"/>
    <property type="project" value="UniProtKB-UniRule"/>
</dbReference>
<dbReference type="GO" id="GO:0006168">
    <property type="term" value="P:adenine salvage"/>
    <property type="evidence" value="ECO:0007669"/>
    <property type="project" value="InterPro"/>
</dbReference>
<dbReference type="GO" id="GO:0044209">
    <property type="term" value="P:AMP salvage"/>
    <property type="evidence" value="ECO:0007669"/>
    <property type="project" value="UniProtKB-UniRule"/>
</dbReference>
<dbReference type="GO" id="GO:0006166">
    <property type="term" value="P:purine ribonucleoside salvage"/>
    <property type="evidence" value="ECO:0007669"/>
    <property type="project" value="UniProtKB-KW"/>
</dbReference>
<dbReference type="CDD" id="cd06223">
    <property type="entry name" value="PRTases_typeI"/>
    <property type="match status" value="1"/>
</dbReference>
<dbReference type="FunFam" id="3.40.50.2020:FF:000004">
    <property type="entry name" value="Adenine phosphoribosyltransferase"/>
    <property type="match status" value="1"/>
</dbReference>
<dbReference type="Gene3D" id="3.40.50.2020">
    <property type="match status" value="1"/>
</dbReference>
<dbReference type="HAMAP" id="MF_00004">
    <property type="entry name" value="Aden_phosphoribosyltr"/>
    <property type="match status" value="1"/>
</dbReference>
<dbReference type="InterPro" id="IPR005764">
    <property type="entry name" value="Ade_phspho_trans"/>
</dbReference>
<dbReference type="InterPro" id="IPR050120">
    <property type="entry name" value="Adenine_PRTase"/>
</dbReference>
<dbReference type="InterPro" id="IPR000836">
    <property type="entry name" value="PRibTrfase_dom"/>
</dbReference>
<dbReference type="InterPro" id="IPR029057">
    <property type="entry name" value="PRTase-like"/>
</dbReference>
<dbReference type="NCBIfam" id="TIGR01090">
    <property type="entry name" value="apt"/>
    <property type="match status" value="1"/>
</dbReference>
<dbReference type="NCBIfam" id="NF002632">
    <property type="entry name" value="PRK02304.1-1"/>
    <property type="match status" value="1"/>
</dbReference>
<dbReference type="NCBIfam" id="NF002634">
    <property type="entry name" value="PRK02304.1-3"/>
    <property type="match status" value="1"/>
</dbReference>
<dbReference type="NCBIfam" id="NF002636">
    <property type="entry name" value="PRK02304.1-5"/>
    <property type="match status" value="1"/>
</dbReference>
<dbReference type="PANTHER" id="PTHR11776">
    <property type="entry name" value="ADENINE PHOSPHORIBOSYLTRANSFERASE"/>
    <property type="match status" value="1"/>
</dbReference>
<dbReference type="PANTHER" id="PTHR11776:SF7">
    <property type="entry name" value="PHOSPHORIBOSYLTRANSFERASE DOMAIN-CONTAINING PROTEIN"/>
    <property type="match status" value="1"/>
</dbReference>
<dbReference type="Pfam" id="PF00156">
    <property type="entry name" value="Pribosyltran"/>
    <property type="match status" value="1"/>
</dbReference>
<dbReference type="SUPFAM" id="SSF53271">
    <property type="entry name" value="PRTase-like"/>
    <property type="match status" value="1"/>
</dbReference>
<dbReference type="PROSITE" id="PS00103">
    <property type="entry name" value="PUR_PYR_PR_TRANSFER"/>
    <property type="match status" value="1"/>
</dbReference>
<evidence type="ECO:0000255" key="1">
    <source>
        <dbReference type="HAMAP-Rule" id="MF_00004"/>
    </source>
</evidence>
<feature type="chain" id="PRO_1000089001" description="Adenine phosphoribosyltransferase">
    <location>
        <begin position="1"/>
        <end position="183"/>
    </location>
</feature>
<sequence length="183" mass="20031">MTATAQQLEFLKNSIKSIQDYPKLGILFRDVTSLLEDPKAYALSIELLVERYKNAGITKVVGTEARGFLFGAPVALGLGVGFVPVRKPRKLPRETIAETYELEYSTDQLEIHVDAIKPGDNVLVVDDLLATGGTIEATVKLIRRLGGKVTDAAFIINLFDLGGEQRLEKQGITCYSLVPFPGH</sequence>
<accession>B5R607</accession>
<reference key="1">
    <citation type="journal article" date="2008" name="Genome Res.">
        <title>Comparative genome analysis of Salmonella enteritidis PT4 and Salmonella gallinarum 287/91 provides insights into evolutionary and host adaptation pathways.</title>
        <authorList>
            <person name="Thomson N.R."/>
            <person name="Clayton D.J."/>
            <person name="Windhorst D."/>
            <person name="Vernikos G."/>
            <person name="Davidson S."/>
            <person name="Churcher C."/>
            <person name="Quail M.A."/>
            <person name="Stevens M."/>
            <person name="Jones M.A."/>
            <person name="Watson M."/>
            <person name="Barron A."/>
            <person name="Layton A."/>
            <person name="Pickard D."/>
            <person name="Kingsley R.A."/>
            <person name="Bignell A."/>
            <person name="Clark L."/>
            <person name="Harris B."/>
            <person name="Ormond D."/>
            <person name="Abdellah Z."/>
            <person name="Brooks K."/>
            <person name="Cherevach I."/>
            <person name="Chillingworth T."/>
            <person name="Woodward J."/>
            <person name="Norberczak H."/>
            <person name="Lord A."/>
            <person name="Arrowsmith C."/>
            <person name="Jagels K."/>
            <person name="Moule S."/>
            <person name="Mungall K."/>
            <person name="Saunders M."/>
            <person name="Whitehead S."/>
            <person name="Chabalgoity J.A."/>
            <person name="Maskell D."/>
            <person name="Humphreys T."/>
            <person name="Roberts M."/>
            <person name="Barrow P.A."/>
            <person name="Dougan G."/>
            <person name="Parkhill J."/>
        </authorList>
    </citation>
    <scope>NUCLEOTIDE SEQUENCE [LARGE SCALE GENOMIC DNA]</scope>
    <source>
        <strain>287/91 / NCTC 13346</strain>
    </source>
</reference>
<name>APT_SALG2</name>
<gene>
    <name evidence="1" type="primary">apt</name>
    <name type="ordered locus">SG0493</name>
</gene>
<proteinExistence type="inferred from homology"/>
<comment type="function">
    <text evidence="1">Catalyzes a salvage reaction resulting in the formation of AMP, that is energically less costly than de novo synthesis.</text>
</comment>
<comment type="catalytic activity">
    <reaction evidence="1">
        <text>AMP + diphosphate = 5-phospho-alpha-D-ribose 1-diphosphate + adenine</text>
        <dbReference type="Rhea" id="RHEA:16609"/>
        <dbReference type="ChEBI" id="CHEBI:16708"/>
        <dbReference type="ChEBI" id="CHEBI:33019"/>
        <dbReference type="ChEBI" id="CHEBI:58017"/>
        <dbReference type="ChEBI" id="CHEBI:456215"/>
        <dbReference type="EC" id="2.4.2.7"/>
    </reaction>
</comment>
<comment type="pathway">
    <text evidence="1">Purine metabolism; AMP biosynthesis via salvage pathway; AMP from adenine: step 1/1.</text>
</comment>
<comment type="subunit">
    <text evidence="1">Homodimer.</text>
</comment>
<comment type="subcellular location">
    <subcellularLocation>
        <location evidence="1">Cytoplasm</location>
    </subcellularLocation>
</comment>
<comment type="similarity">
    <text evidence="1">Belongs to the purine/pyrimidine phosphoribosyltransferase family.</text>
</comment>
<protein>
    <recommendedName>
        <fullName evidence="1">Adenine phosphoribosyltransferase</fullName>
        <shortName evidence="1">APRT</shortName>
        <ecNumber evidence="1">2.4.2.7</ecNumber>
    </recommendedName>
</protein>
<organism>
    <name type="scientific">Salmonella gallinarum (strain 287/91 / NCTC 13346)</name>
    <dbReference type="NCBI Taxonomy" id="550538"/>
    <lineage>
        <taxon>Bacteria</taxon>
        <taxon>Pseudomonadati</taxon>
        <taxon>Pseudomonadota</taxon>
        <taxon>Gammaproteobacteria</taxon>
        <taxon>Enterobacterales</taxon>
        <taxon>Enterobacteriaceae</taxon>
        <taxon>Salmonella</taxon>
    </lineage>
</organism>